<reference key="1">
    <citation type="journal article" date="2004" name="Nucleic Acids Res.">
        <title>Unique features revealed by the genome sequence of Acinetobacter sp. ADP1, a versatile and naturally transformation competent bacterium.</title>
        <authorList>
            <person name="Barbe V."/>
            <person name="Vallenet D."/>
            <person name="Fonknechten N."/>
            <person name="Kreimeyer A."/>
            <person name="Oztas S."/>
            <person name="Labarre L."/>
            <person name="Cruveiller S."/>
            <person name="Robert C."/>
            <person name="Duprat S."/>
            <person name="Wincker P."/>
            <person name="Ornston L.N."/>
            <person name="Weissenbach J."/>
            <person name="Marliere P."/>
            <person name="Cohen G.N."/>
            <person name="Medigue C."/>
        </authorList>
    </citation>
    <scope>NUCLEOTIDE SEQUENCE [LARGE SCALE GENOMIC DNA]</scope>
    <source>
        <strain>ATCC 33305 / BD413 / ADP1</strain>
    </source>
</reference>
<name>ARLY_ACIAD</name>
<evidence type="ECO:0000255" key="1">
    <source>
        <dbReference type="HAMAP-Rule" id="MF_00006"/>
    </source>
</evidence>
<evidence type="ECO:0000256" key="2">
    <source>
        <dbReference type="SAM" id="MobiDB-lite"/>
    </source>
</evidence>
<comment type="catalytic activity">
    <reaction evidence="1">
        <text>2-(N(omega)-L-arginino)succinate = fumarate + L-arginine</text>
        <dbReference type="Rhea" id="RHEA:24020"/>
        <dbReference type="ChEBI" id="CHEBI:29806"/>
        <dbReference type="ChEBI" id="CHEBI:32682"/>
        <dbReference type="ChEBI" id="CHEBI:57472"/>
        <dbReference type="EC" id="4.3.2.1"/>
    </reaction>
</comment>
<comment type="pathway">
    <text evidence="1">Amino-acid biosynthesis; L-arginine biosynthesis; L-arginine from L-ornithine and carbamoyl phosphate: step 3/3.</text>
</comment>
<comment type="subcellular location">
    <subcellularLocation>
        <location evidence="1">Cytoplasm</location>
    </subcellularLocation>
</comment>
<comment type="similarity">
    <text evidence="1">Belongs to the lyase 1 family. Argininosuccinate lyase subfamily.</text>
</comment>
<keyword id="KW-0028">Amino-acid biosynthesis</keyword>
<keyword id="KW-0055">Arginine biosynthesis</keyword>
<keyword id="KW-0963">Cytoplasm</keyword>
<keyword id="KW-0456">Lyase</keyword>
<accession>Q6FFB2</accession>
<dbReference type="EC" id="4.3.2.1" evidence="1"/>
<dbReference type="EMBL" id="CR543861">
    <property type="protein sequence ID" value="CAG67245.1"/>
    <property type="molecule type" value="Genomic_DNA"/>
</dbReference>
<dbReference type="RefSeq" id="WP_011182010.1">
    <property type="nucleotide sequence ID" value="NC_005966.1"/>
</dbReference>
<dbReference type="SMR" id="Q6FFB2"/>
<dbReference type="STRING" id="202950.GCA_001485005_00554"/>
<dbReference type="GeneID" id="45232794"/>
<dbReference type="KEGG" id="aci:ACIAD0283"/>
<dbReference type="eggNOG" id="COG0165">
    <property type="taxonomic scope" value="Bacteria"/>
</dbReference>
<dbReference type="HOGENOM" id="CLU_027272_2_3_6"/>
<dbReference type="OrthoDB" id="9769623at2"/>
<dbReference type="BioCyc" id="ASP62977:ACIAD_RS01325-MONOMER"/>
<dbReference type="UniPathway" id="UPA00068">
    <property type="reaction ID" value="UER00114"/>
</dbReference>
<dbReference type="Proteomes" id="UP000000430">
    <property type="component" value="Chromosome"/>
</dbReference>
<dbReference type="GO" id="GO:0005829">
    <property type="term" value="C:cytosol"/>
    <property type="evidence" value="ECO:0007669"/>
    <property type="project" value="TreeGrafter"/>
</dbReference>
<dbReference type="GO" id="GO:0004056">
    <property type="term" value="F:argininosuccinate lyase activity"/>
    <property type="evidence" value="ECO:0007669"/>
    <property type="project" value="UniProtKB-UniRule"/>
</dbReference>
<dbReference type="GO" id="GO:0042450">
    <property type="term" value="P:arginine biosynthetic process via ornithine"/>
    <property type="evidence" value="ECO:0007669"/>
    <property type="project" value="InterPro"/>
</dbReference>
<dbReference type="GO" id="GO:0006526">
    <property type="term" value="P:L-arginine biosynthetic process"/>
    <property type="evidence" value="ECO:0007669"/>
    <property type="project" value="UniProtKB-UniRule"/>
</dbReference>
<dbReference type="CDD" id="cd01359">
    <property type="entry name" value="Argininosuccinate_lyase"/>
    <property type="match status" value="1"/>
</dbReference>
<dbReference type="FunFam" id="1.10.275.10:FF:000002">
    <property type="entry name" value="Argininosuccinate lyase"/>
    <property type="match status" value="1"/>
</dbReference>
<dbReference type="FunFam" id="1.10.40.30:FF:000001">
    <property type="entry name" value="Argininosuccinate lyase"/>
    <property type="match status" value="1"/>
</dbReference>
<dbReference type="FunFam" id="1.20.200.10:FF:000015">
    <property type="entry name" value="argininosuccinate lyase isoform X2"/>
    <property type="match status" value="1"/>
</dbReference>
<dbReference type="Gene3D" id="1.10.40.30">
    <property type="entry name" value="Fumarase/aspartase (C-terminal domain)"/>
    <property type="match status" value="1"/>
</dbReference>
<dbReference type="Gene3D" id="1.20.200.10">
    <property type="entry name" value="Fumarase/aspartase (Central domain)"/>
    <property type="match status" value="1"/>
</dbReference>
<dbReference type="Gene3D" id="1.10.275.10">
    <property type="entry name" value="Fumarase/aspartase (N-terminal domain)"/>
    <property type="match status" value="1"/>
</dbReference>
<dbReference type="HAMAP" id="MF_00006">
    <property type="entry name" value="Arg_succ_lyase"/>
    <property type="match status" value="1"/>
</dbReference>
<dbReference type="InterPro" id="IPR029419">
    <property type="entry name" value="Arg_succ_lyase_C"/>
</dbReference>
<dbReference type="InterPro" id="IPR009049">
    <property type="entry name" value="Argininosuccinate_lyase"/>
</dbReference>
<dbReference type="InterPro" id="IPR024083">
    <property type="entry name" value="Fumarase/histidase_N"/>
</dbReference>
<dbReference type="InterPro" id="IPR020557">
    <property type="entry name" value="Fumarate_lyase_CS"/>
</dbReference>
<dbReference type="InterPro" id="IPR000362">
    <property type="entry name" value="Fumarate_lyase_fam"/>
</dbReference>
<dbReference type="InterPro" id="IPR022761">
    <property type="entry name" value="Fumarate_lyase_N"/>
</dbReference>
<dbReference type="InterPro" id="IPR008948">
    <property type="entry name" value="L-Aspartase-like"/>
</dbReference>
<dbReference type="NCBIfam" id="TIGR00838">
    <property type="entry name" value="argH"/>
    <property type="match status" value="1"/>
</dbReference>
<dbReference type="PANTHER" id="PTHR43814">
    <property type="entry name" value="ARGININOSUCCINATE LYASE"/>
    <property type="match status" value="1"/>
</dbReference>
<dbReference type="PANTHER" id="PTHR43814:SF1">
    <property type="entry name" value="ARGININOSUCCINATE LYASE"/>
    <property type="match status" value="1"/>
</dbReference>
<dbReference type="Pfam" id="PF14698">
    <property type="entry name" value="ASL_C2"/>
    <property type="match status" value="1"/>
</dbReference>
<dbReference type="Pfam" id="PF00206">
    <property type="entry name" value="Lyase_1"/>
    <property type="match status" value="1"/>
</dbReference>
<dbReference type="PRINTS" id="PR00145">
    <property type="entry name" value="ARGSUCLYASE"/>
</dbReference>
<dbReference type="PRINTS" id="PR00149">
    <property type="entry name" value="FUMRATELYASE"/>
</dbReference>
<dbReference type="SUPFAM" id="SSF48557">
    <property type="entry name" value="L-aspartase-like"/>
    <property type="match status" value="1"/>
</dbReference>
<dbReference type="PROSITE" id="PS00163">
    <property type="entry name" value="FUMARATE_LYASES"/>
    <property type="match status" value="1"/>
</dbReference>
<proteinExistence type="inferred from homology"/>
<feature type="chain" id="PRO_0000137729" description="Argininosuccinate lyase">
    <location>
        <begin position="1"/>
        <end position="477"/>
    </location>
</feature>
<feature type="region of interest" description="Disordered" evidence="2">
    <location>
        <begin position="1"/>
        <end position="21"/>
    </location>
</feature>
<feature type="compositionally biased region" description="Polar residues" evidence="2">
    <location>
        <begin position="1"/>
        <end position="18"/>
    </location>
</feature>
<sequence length="477" mass="52919">MTTSSHSSEQPTSTQTSGMWGGRFTEATDAFVAEFTASVQFDQRFYKQDIAGSIAHATMLAKVGVLTEAERDDIIQGLSAIKSEIEAGQFEWRIDLEDVHMNIESRLTQRIGITGKKLHTGRSRNDQVATDIRLYLRDEIDDILTILLRLQKGLLGLAAQNTQTIMPGFTHLQTAQPVTFGHHLMAWFEMFVRDTERLQDCRKRVNRMPLGSAALAGTTYPIDRAFTAELLGFEAVSENSLDAVSDRDFAIEFNAAASLIMMHLSRMSEELILWTSAQFKFVNIPDRFCTGSSIMPQKKNPDVPELIRGKSGRVFGDLISLLTLMKGQPLAYNKDNQEDKEPLFDAIDTVRGSLMAFADMVPALGPNIEIMREAALRGFSTATDLADYLVKKGVAFRDAHEIVGKAVALGVQEEKDLSELSLEQLQQFSDLITADVFDKALTLEASVNARDHIGGTSPKQVEAAIARAYDRLEKLYA</sequence>
<organism>
    <name type="scientific">Acinetobacter baylyi (strain ATCC 33305 / BD413 / ADP1)</name>
    <dbReference type="NCBI Taxonomy" id="62977"/>
    <lineage>
        <taxon>Bacteria</taxon>
        <taxon>Pseudomonadati</taxon>
        <taxon>Pseudomonadota</taxon>
        <taxon>Gammaproteobacteria</taxon>
        <taxon>Moraxellales</taxon>
        <taxon>Moraxellaceae</taxon>
        <taxon>Acinetobacter</taxon>
    </lineage>
</organism>
<gene>
    <name evidence="1" type="primary">argH</name>
    <name type="ordered locus">ACIAD0283</name>
</gene>
<protein>
    <recommendedName>
        <fullName evidence="1">Argininosuccinate lyase</fullName>
        <shortName evidence="1">ASAL</shortName>
        <ecNumber evidence="1">4.3.2.1</ecNumber>
    </recommendedName>
    <alternativeName>
        <fullName evidence="1">Arginosuccinase</fullName>
    </alternativeName>
</protein>